<dbReference type="EMBL" id="X17403">
    <property type="protein sequence ID" value="CAA35293.1"/>
    <property type="molecule type" value="Genomic_DNA"/>
</dbReference>
<dbReference type="EMBL" id="X04650">
    <property type="protein sequence ID" value="CAB37117.1"/>
    <property type="molecule type" value="Genomic_DNA"/>
</dbReference>
<dbReference type="EMBL" id="BK000394">
    <property type="protein sequence ID" value="DAA00213.1"/>
    <property type="molecule type" value="Genomic_DNA"/>
</dbReference>
<dbReference type="PIR" id="A27216">
    <property type="entry name" value="QQBED1"/>
</dbReference>
<dbReference type="Proteomes" id="UP000008991">
    <property type="component" value="Segment"/>
</dbReference>
<dbReference type="Proteomes" id="UP000008992">
    <property type="component" value="Segment"/>
</dbReference>
<dbReference type="InterPro" id="IPR003360">
    <property type="entry name" value="US22-like"/>
</dbReference>
<dbReference type="Pfam" id="PF02393">
    <property type="entry name" value="US22"/>
    <property type="match status" value="2"/>
</dbReference>
<organism>
    <name type="scientific">Human cytomegalovirus (strain AD169)</name>
    <name type="common">HHV-5</name>
    <name type="synonym">Human herpesvirus 5</name>
    <dbReference type="NCBI Taxonomy" id="10360"/>
    <lineage>
        <taxon>Viruses</taxon>
        <taxon>Duplodnaviria</taxon>
        <taxon>Heunggongvirae</taxon>
        <taxon>Peploviricota</taxon>
        <taxon>Herviviricetes</taxon>
        <taxon>Herpesvirales</taxon>
        <taxon>Orthoherpesviridae</taxon>
        <taxon>Betaherpesvirinae</taxon>
        <taxon>Cytomegalovirus</taxon>
        <taxon>Cytomegalovirus humanbeta5</taxon>
        <taxon>Human cytomegalovirus</taxon>
    </lineage>
</organism>
<keyword id="KW-1185">Reference proteome</keyword>
<reference key="1">
    <citation type="journal article" date="1986" name="J. Mol. Biol.">
        <title>Sequence of the short unique region, short repeats, and part of the long repeats of human cytomegalovirus.</title>
        <authorList>
            <person name="Weston K.M."/>
            <person name="Barrell B.G."/>
        </authorList>
    </citation>
    <scope>NUCLEOTIDE SEQUENCE [GENOMIC DNA]</scope>
</reference>
<reference key="2">
    <citation type="journal article" date="1990" name="Curr. Top. Microbiol. Immunol.">
        <title>Analysis of the protein-coding content of the sequence of human cytomegalovirus strain AD169.</title>
        <authorList>
            <person name="Chee M.S."/>
            <person name="Bankier A.T."/>
            <person name="Beck S."/>
            <person name="Bohni R."/>
            <person name="Brown C.M."/>
            <person name="Cerny R."/>
            <person name="Horsnell T."/>
            <person name="Hutchison C.A. III"/>
            <person name="Kouzarides T."/>
            <person name="Martignetti J.A."/>
            <person name="Preddie E."/>
            <person name="Satchwell S.C."/>
            <person name="Tomlinson P."/>
            <person name="Weston K.M."/>
            <person name="Barrell B.G."/>
        </authorList>
    </citation>
    <scope>NUCLEOTIDE SEQUENCE [LARGE SCALE GENOMIC DNA]</scope>
</reference>
<reference key="3">
    <citation type="journal article" date="2003" name="J. Gen. Virol.">
        <title>The human cytomegalovirus genome revisited: comparison with the chimpanzee cytomegalovirus genome.</title>
        <authorList>
            <person name="Davison A.J."/>
            <person name="Dolan A."/>
            <person name="Akter P."/>
            <person name="Addison C."/>
            <person name="Dargan D.J."/>
            <person name="Alcendor D.J."/>
            <person name="McGeoch D.J."/>
            <person name="Hayward G.S."/>
        </authorList>
    </citation>
    <scope>GENOME REANNOTATION</scope>
</reference>
<reference key="4">
    <citation type="journal article" date="2003" name="J. Gen. Virol.">
        <authorList>
            <person name="Davison A.J."/>
            <person name="Dolan A."/>
            <person name="Akter P."/>
            <person name="Addison C."/>
            <person name="Dargan D.J."/>
            <person name="Alcendor D.J."/>
            <person name="McGeoch D.J."/>
            <person name="Hayward G.S."/>
        </authorList>
    </citation>
    <scope>ERRATUM OF PUBMED:12533697</scope>
</reference>
<sequence length="603" mass="70020">MRQSYRYASGAVVRRTLKGLRKLILCQDLRQDIRHLVRSYADMNISLPISAPPGWRLDFVEFEDIFGSAAVTDGPETPWGQLICCEESLESLGVLQFSTTVLPRVHGPRSSSEDEDSDDDDFFVYVEEIEPPSQARLVLLLGRYETVWCLDRDRGVLYYLAHSLDDFARHGLLHCEAIYGEQMRTPLLTTQPDHIICDLRLHDNSISELQRVTCRYRGECVPLRTPGEMTRPLLLCGQAENLKGVWPFICMETEQFNDLLKFFVDRLCCETMIMGVVGESLPSGVFHADFVILVDRACEFFYFDVSRREIWRLADSVDMLLTVGLLKIYQAGRRFHYAVDDAERLEVPGRCPHENFPFWDRFGTVERVRASTRHHELRYKWLIRKDRFIVRPDWCSMRNSLDEVSGTADVSWDPRIRPDYPQTSDLECAKQYWQELNDHVREQTARYGPVRRYSVWCGMSSRLERAVKRLQQRIPRQNLMNPSLMNQGLCVYYSDEEEDQEEDDTSDDDDQEKETENPQNNIGSLTRTPSSPGSLEGVEERMLNVMKEAVAEQDRKKTQKKHKIDTAQRRVLTRRAARAAVLEGRPTPKPTMPHPVSYLPFWM</sequence>
<proteinExistence type="inferred from homology"/>
<evidence type="ECO:0000256" key="1">
    <source>
        <dbReference type="SAM" id="MobiDB-lite"/>
    </source>
</evidence>
<evidence type="ECO:0000305" key="2"/>
<comment type="similarity">
    <text evidence="2">Belongs to the herpesviridae US22 family.</text>
</comment>
<accession>P09699</accession>
<accession>Q7M6H5</accession>
<protein>
    <recommendedName>
        <fullName>Uncharacterized protein HHLF5</fullName>
    </recommendedName>
</protein>
<feature type="chain" id="PRO_0000115288" description="Uncharacterized protein HHLF5">
    <location>
        <begin position="1"/>
        <end position="603"/>
    </location>
</feature>
<feature type="region of interest" description="Disordered" evidence="1">
    <location>
        <begin position="496"/>
        <end position="536"/>
    </location>
</feature>
<feature type="region of interest" description="Disordered" evidence="1">
    <location>
        <begin position="549"/>
        <end position="568"/>
    </location>
</feature>
<feature type="compositionally biased region" description="Acidic residues" evidence="1">
    <location>
        <begin position="496"/>
        <end position="513"/>
    </location>
</feature>
<feature type="compositionally biased region" description="Polar residues" evidence="1">
    <location>
        <begin position="517"/>
        <end position="533"/>
    </location>
</feature>
<name>US26_HCMVA</name>
<gene>
    <name type="primary">US26</name>
</gene>
<organismHost>
    <name type="scientific">Homo sapiens</name>
    <name type="common">Human</name>
    <dbReference type="NCBI Taxonomy" id="9606"/>
</organismHost>